<protein>
    <recommendedName>
        <fullName>Uncharacterized protein Rv2293c</fullName>
    </recommendedName>
</protein>
<name>Y2293_MYCTU</name>
<dbReference type="EMBL" id="AL123456">
    <property type="protein sequence ID" value="CCP45075.1"/>
    <property type="molecule type" value="Genomic_DNA"/>
</dbReference>
<dbReference type="PIR" id="A70733">
    <property type="entry name" value="A70733"/>
</dbReference>
<dbReference type="RefSeq" id="NP_216809.1">
    <property type="nucleotide sequence ID" value="NC_000962.3"/>
</dbReference>
<dbReference type="RefSeq" id="WP_003899254.1">
    <property type="nucleotide sequence ID" value="NC_000962.3"/>
</dbReference>
<dbReference type="SMR" id="P9WLE1"/>
<dbReference type="STRING" id="83332.Rv2293c"/>
<dbReference type="PaxDb" id="83332-Rv2293c"/>
<dbReference type="DNASU" id="887283"/>
<dbReference type="GeneID" id="887283"/>
<dbReference type="KEGG" id="mtu:Rv2293c"/>
<dbReference type="KEGG" id="mtv:RVBD_2293c"/>
<dbReference type="TubercuList" id="Rv2293c"/>
<dbReference type="eggNOG" id="COG0775">
    <property type="taxonomic scope" value="Bacteria"/>
</dbReference>
<dbReference type="InParanoid" id="P9WLE1"/>
<dbReference type="OrthoDB" id="4750424at2"/>
<dbReference type="Proteomes" id="UP000001584">
    <property type="component" value="Chromosome"/>
</dbReference>
<dbReference type="GO" id="GO:0005886">
    <property type="term" value="C:plasma membrane"/>
    <property type="evidence" value="ECO:0007669"/>
    <property type="project" value="UniProtKB-SubCell"/>
</dbReference>
<dbReference type="GO" id="GO:0003824">
    <property type="term" value="F:catalytic activity"/>
    <property type="evidence" value="ECO:0007669"/>
    <property type="project" value="InterPro"/>
</dbReference>
<dbReference type="GO" id="GO:0009116">
    <property type="term" value="P:nucleoside metabolic process"/>
    <property type="evidence" value="ECO:0007669"/>
    <property type="project" value="InterPro"/>
</dbReference>
<dbReference type="Gene3D" id="3.40.50.1580">
    <property type="entry name" value="Nucleoside phosphorylase domain"/>
    <property type="match status" value="1"/>
</dbReference>
<dbReference type="InterPro" id="IPR000845">
    <property type="entry name" value="Nucleoside_phosphorylase_d"/>
</dbReference>
<dbReference type="InterPro" id="IPR035994">
    <property type="entry name" value="Nucleoside_phosphorylase_sf"/>
</dbReference>
<dbReference type="Pfam" id="PF01048">
    <property type="entry name" value="PNP_UDP_1"/>
    <property type="match status" value="1"/>
</dbReference>
<dbReference type="SUPFAM" id="SSF53167">
    <property type="entry name" value="Purine and uridine phosphorylases"/>
    <property type="match status" value="1"/>
</dbReference>
<dbReference type="PROSITE" id="PS51257">
    <property type="entry name" value="PROKAR_LIPOPROTEIN"/>
    <property type="match status" value="1"/>
</dbReference>
<accession>P9WLE1</accession>
<accession>L0T9E0</accession>
<accession>Q50673</accession>
<keyword id="KW-1003">Cell membrane</keyword>
<keyword id="KW-0472">Membrane</keyword>
<keyword id="KW-1185">Reference proteome</keyword>
<keyword id="KW-0732">Signal</keyword>
<keyword id="KW-0812">Transmembrane</keyword>
<keyword id="KW-1133">Transmembrane helix</keyword>
<gene>
    <name type="ordered locus">Rv2293c</name>
    <name type="ORF">MTCY339.17</name>
</gene>
<feature type="signal peptide" evidence="2">
    <location>
        <begin position="1"/>
        <end position="24"/>
    </location>
</feature>
<feature type="chain" id="PRO_0000014130" description="Uncharacterized protein Rv2293c">
    <location>
        <begin position="25"/>
        <end position="246"/>
    </location>
</feature>
<feature type="transmembrane region" description="Helical" evidence="1">
    <location>
        <begin position="71"/>
        <end position="91"/>
    </location>
</feature>
<feature type="transmembrane region" description="Helical" evidence="1">
    <location>
        <begin position="104"/>
        <end position="124"/>
    </location>
</feature>
<comment type="subcellular location">
    <subcellularLocation>
        <location evidence="2">Cell membrane</location>
        <topology evidence="3">Multi-pass membrane protein</topology>
    </subcellularLocation>
</comment>
<sequence>MGAPLRHCLLVAAALSLGCGVAAADPGYVANVIPCEQRTLVLSAFPAEADAVLAHTALDANPVVVADRRRYYLGSISGKKVIVAMTGIGLVNATNTTETAFARFTCASSIAIAAVMFSGVAGGAGRTSIGDVAIPARWTLDNGATFRGVDPGMLATAQTLSVVLDNINTLGNPVCLCRNVPVVRLNHLGRQPQLFVGGDGSSSDKNNGQAFPCIPNGGSVFAANPVVHPIAHLAIPVTFSRRRDPG</sequence>
<reference key="1">
    <citation type="journal article" date="1998" name="Nature">
        <title>Deciphering the biology of Mycobacterium tuberculosis from the complete genome sequence.</title>
        <authorList>
            <person name="Cole S.T."/>
            <person name="Brosch R."/>
            <person name="Parkhill J."/>
            <person name="Garnier T."/>
            <person name="Churcher C.M."/>
            <person name="Harris D.E."/>
            <person name="Gordon S.V."/>
            <person name="Eiglmeier K."/>
            <person name="Gas S."/>
            <person name="Barry C.E. III"/>
            <person name="Tekaia F."/>
            <person name="Badcock K."/>
            <person name="Basham D."/>
            <person name="Brown D."/>
            <person name="Chillingworth T."/>
            <person name="Connor R."/>
            <person name="Davies R.M."/>
            <person name="Devlin K."/>
            <person name="Feltwell T."/>
            <person name="Gentles S."/>
            <person name="Hamlin N."/>
            <person name="Holroyd S."/>
            <person name="Hornsby T."/>
            <person name="Jagels K."/>
            <person name="Krogh A."/>
            <person name="McLean J."/>
            <person name="Moule S."/>
            <person name="Murphy L.D."/>
            <person name="Oliver S."/>
            <person name="Osborne J."/>
            <person name="Quail M.A."/>
            <person name="Rajandream M.A."/>
            <person name="Rogers J."/>
            <person name="Rutter S."/>
            <person name="Seeger K."/>
            <person name="Skelton S."/>
            <person name="Squares S."/>
            <person name="Squares R."/>
            <person name="Sulston J.E."/>
            <person name="Taylor K."/>
            <person name="Whitehead S."/>
            <person name="Barrell B.G."/>
        </authorList>
    </citation>
    <scope>NUCLEOTIDE SEQUENCE [LARGE SCALE GENOMIC DNA]</scope>
    <source>
        <strain>ATCC 25618 / H37Rv</strain>
    </source>
</reference>
<proteinExistence type="inferred from homology"/>
<evidence type="ECO:0000255" key="1"/>
<evidence type="ECO:0000255" key="2">
    <source>
        <dbReference type="PROSITE-ProRule" id="PRU00303"/>
    </source>
</evidence>
<evidence type="ECO:0000305" key="3"/>
<organism>
    <name type="scientific">Mycobacterium tuberculosis (strain ATCC 25618 / H37Rv)</name>
    <dbReference type="NCBI Taxonomy" id="83332"/>
    <lineage>
        <taxon>Bacteria</taxon>
        <taxon>Bacillati</taxon>
        <taxon>Actinomycetota</taxon>
        <taxon>Actinomycetes</taxon>
        <taxon>Mycobacteriales</taxon>
        <taxon>Mycobacteriaceae</taxon>
        <taxon>Mycobacterium</taxon>
        <taxon>Mycobacterium tuberculosis complex</taxon>
    </lineage>
</organism>